<name>FAU1_SACI3</name>
<feature type="chain" id="PRO_1000216186" description="Probable ribonuclease FAU-1">
    <location>
        <begin position="1"/>
        <end position="424"/>
    </location>
</feature>
<sequence>MKGRVRIRGIYATALTSIFSSLSYEIVQQSVEIAERFMREVNNLPADITIKDFEYDRGKIIVMGNGTIEEDLHDVFKYSFHWKSPIKLYSVIEADESCTYGNFKVEPCLEEGIVIKPPYDGKIVLSETKAVSKYAMVWRGKGVTTFSEHINNEEERLRLLTLSSPLNRKGYNVKWRSNAKYATLNELKEDLERLVLRYENREFRDQGEDFYLITLSLPDKLHLDEVRKSIVNTVKYHHMLKLSYNREVDSLEKDKEGSPVKLLEALISDFMKIEHIKADGKAIYLRGGKVIEKEVNNDGYRITLRREINGNGVLDGIGKRIENGDYDIVEYNSDKWYQIHRYYSGIDNSLKGIYINISTPPELLKGKIRYLDLEIDIAIRDSEIIVLDEDELNKKSIYMHSSLVNKAKEVANYLIDCIQQNKLI</sequence>
<comment type="function">
    <text evidence="1">Probable RNase involved in rRNA stability through maturation and/or degradation of precursor rRNAs. Binds to RNA in loop regions with AU-rich sequences.</text>
</comment>
<comment type="similarity">
    <text evidence="1">Belongs to the FAU-1 family.</text>
</comment>
<evidence type="ECO:0000255" key="1">
    <source>
        <dbReference type="HAMAP-Rule" id="MF_01910"/>
    </source>
</evidence>
<protein>
    <recommendedName>
        <fullName evidence="1">Probable ribonuclease FAU-1</fullName>
        <ecNumber evidence="1">3.1.26.-</ecNumber>
    </recommendedName>
    <alternativeName>
        <fullName evidence="1">RNA-binding protein FAU-1</fullName>
    </alternativeName>
</protein>
<dbReference type="EC" id="3.1.26.-" evidence="1"/>
<dbReference type="EMBL" id="CP001401">
    <property type="protein sequence ID" value="ACP55084.1"/>
    <property type="molecule type" value="Genomic_DNA"/>
</dbReference>
<dbReference type="RefSeq" id="WP_012711156.1">
    <property type="nucleotide sequence ID" value="NC_012632.1"/>
</dbReference>
<dbReference type="SMR" id="C3N509"/>
<dbReference type="KEGG" id="sim:M1627_1196"/>
<dbReference type="HOGENOM" id="CLU_044303_0_0_2"/>
<dbReference type="Proteomes" id="UP000002307">
    <property type="component" value="Chromosome"/>
</dbReference>
<dbReference type="GO" id="GO:0035925">
    <property type="term" value="F:mRNA 3'-UTR AU-rich region binding"/>
    <property type="evidence" value="ECO:0007669"/>
    <property type="project" value="UniProtKB-UniRule"/>
</dbReference>
<dbReference type="GO" id="GO:0016891">
    <property type="term" value="F:RNA endonuclease activity, producing 5'-phosphomonoesters"/>
    <property type="evidence" value="ECO:0007669"/>
    <property type="project" value="UniProtKB-UniRule"/>
</dbReference>
<dbReference type="GO" id="GO:0006364">
    <property type="term" value="P:rRNA processing"/>
    <property type="evidence" value="ECO:0007669"/>
    <property type="project" value="UniProtKB-UniRule"/>
</dbReference>
<dbReference type="Gene3D" id="2.40.380.10">
    <property type="entry name" value="FomD-like"/>
    <property type="match status" value="1"/>
</dbReference>
<dbReference type="HAMAP" id="MF_01910">
    <property type="entry name" value="RNA_binding_AU_1"/>
    <property type="match status" value="1"/>
</dbReference>
<dbReference type="InterPro" id="IPR007295">
    <property type="entry name" value="DUF402"/>
</dbReference>
<dbReference type="InterPro" id="IPR035930">
    <property type="entry name" value="FomD-like_sf"/>
</dbReference>
<dbReference type="InterPro" id="IPR050212">
    <property type="entry name" value="Ntdp-like"/>
</dbReference>
<dbReference type="InterPro" id="IPR016730">
    <property type="entry name" value="RNA-bd_FAU-1"/>
</dbReference>
<dbReference type="PANTHER" id="PTHR39159">
    <property type="match status" value="1"/>
</dbReference>
<dbReference type="PANTHER" id="PTHR39159:SF1">
    <property type="entry name" value="UPF0374 PROTEIN YGAC"/>
    <property type="match status" value="1"/>
</dbReference>
<dbReference type="Pfam" id="PF04167">
    <property type="entry name" value="DUF402"/>
    <property type="match status" value="1"/>
</dbReference>
<dbReference type="PIRSF" id="PIRSF018644">
    <property type="entry name" value="RNA-binding_FAU-1"/>
    <property type="match status" value="1"/>
</dbReference>
<dbReference type="SUPFAM" id="SSF159234">
    <property type="entry name" value="FomD-like"/>
    <property type="match status" value="1"/>
</dbReference>
<accession>C3N509</accession>
<keyword id="KW-0255">Endonuclease</keyword>
<keyword id="KW-0378">Hydrolase</keyword>
<keyword id="KW-0540">Nuclease</keyword>
<keyword id="KW-0694">RNA-binding</keyword>
<keyword id="KW-0698">rRNA processing</keyword>
<gene>
    <name evidence="1" type="primary">fau-1</name>
    <name type="ordered locus">M1627_1196</name>
</gene>
<reference key="1">
    <citation type="journal article" date="2009" name="Proc. Natl. Acad. Sci. U.S.A.">
        <title>Biogeography of the Sulfolobus islandicus pan-genome.</title>
        <authorList>
            <person name="Reno M.L."/>
            <person name="Held N.L."/>
            <person name="Fields C.J."/>
            <person name="Burke P.V."/>
            <person name="Whitaker R.J."/>
        </authorList>
    </citation>
    <scope>NUCLEOTIDE SEQUENCE [LARGE SCALE GENOMIC DNA]</scope>
    <source>
        <strain>M.16.27</strain>
    </source>
</reference>
<proteinExistence type="inferred from homology"/>
<organism>
    <name type="scientific">Saccharolobus islandicus (strain M.16.27)</name>
    <name type="common">Sulfolobus islandicus</name>
    <dbReference type="NCBI Taxonomy" id="427318"/>
    <lineage>
        <taxon>Archaea</taxon>
        <taxon>Thermoproteota</taxon>
        <taxon>Thermoprotei</taxon>
        <taxon>Sulfolobales</taxon>
        <taxon>Sulfolobaceae</taxon>
        <taxon>Saccharolobus</taxon>
    </lineage>
</organism>